<keyword id="KW-0963">Cytoplasm</keyword>
<keyword id="KW-0507">mRNA processing</keyword>
<keyword id="KW-0508">mRNA splicing</keyword>
<keyword id="KW-0509">mRNA transport</keyword>
<keyword id="KW-0539">Nucleus</keyword>
<keyword id="KW-1185">Reference proteome</keyword>
<keyword id="KW-0813">Transport</keyword>
<protein>
    <recommendedName>
        <fullName evidence="4">THO complex subunit tho5</fullName>
    </recommendedName>
</protein>
<dbReference type="EMBL" id="CU329671">
    <property type="protein sequence ID" value="CAB54812.1"/>
    <property type="molecule type" value="Genomic_DNA"/>
</dbReference>
<dbReference type="PIR" id="T40548">
    <property type="entry name" value="T40548"/>
</dbReference>
<dbReference type="RefSeq" id="NP_595302.1">
    <property type="nucleotide sequence ID" value="NM_001021209.2"/>
</dbReference>
<dbReference type="SMR" id="Q9USR5"/>
<dbReference type="BioGRID" id="277571">
    <property type="interactions" value="5"/>
</dbReference>
<dbReference type="STRING" id="284812.Q9USR5"/>
<dbReference type="iPTMnet" id="Q9USR5"/>
<dbReference type="PaxDb" id="4896-SPBC577.04.1"/>
<dbReference type="EnsemblFungi" id="SPBC577.04.1">
    <property type="protein sequence ID" value="SPBC577.04.1:pep"/>
    <property type="gene ID" value="SPBC577.04"/>
</dbReference>
<dbReference type="GeneID" id="2541056"/>
<dbReference type="KEGG" id="spo:2541056"/>
<dbReference type="PomBase" id="SPBC577.04">
    <property type="gene designation" value="tho5"/>
</dbReference>
<dbReference type="VEuPathDB" id="FungiDB:SPBC577.04"/>
<dbReference type="eggNOG" id="KOG2216">
    <property type="taxonomic scope" value="Eukaryota"/>
</dbReference>
<dbReference type="HOGENOM" id="CLU_082754_0_0_1"/>
<dbReference type="InParanoid" id="Q9USR5"/>
<dbReference type="OMA" id="HKYMKLP"/>
<dbReference type="PhylomeDB" id="Q9USR5"/>
<dbReference type="PRO" id="PR:Q9USR5"/>
<dbReference type="Proteomes" id="UP000002485">
    <property type="component" value="Chromosome II"/>
</dbReference>
<dbReference type="GO" id="GO:0005829">
    <property type="term" value="C:cytosol"/>
    <property type="evidence" value="ECO:0007005"/>
    <property type="project" value="PomBase"/>
</dbReference>
<dbReference type="GO" id="GO:0005634">
    <property type="term" value="C:nucleus"/>
    <property type="evidence" value="ECO:0007005"/>
    <property type="project" value="PomBase"/>
</dbReference>
<dbReference type="GO" id="GO:0000445">
    <property type="term" value="C:THO complex part of transcription export complex"/>
    <property type="evidence" value="ECO:0000250"/>
    <property type="project" value="PomBase"/>
</dbReference>
<dbReference type="GO" id="GO:0006397">
    <property type="term" value="P:mRNA processing"/>
    <property type="evidence" value="ECO:0007669"/>
    <property type="project" value="UniProtKB-KW"/>
</dbReference>
<dbReference type="GO" id="GO:0016973">
    <property type="term" value="P:poly(A)+ mRNA export from nucleus"/>
    <property type="evidence" value="ECO:0000305"/>
    <property type="project" value="PomBase"/>
</dbReference>
<dbReference type="GO" id="GO:0008380">
    <property type="term" value="P:RNA splicing"/>
    <property type="evidence" value="ECO:0007669"/>
    <property type="project" value="UniProtKB-KW"/>
</dbReference>
<dbReference type="InterPro" id="IPR019163">
    <property type="entry name" value="THO_Thoc5"/>
</dbReference>
<dbReference type="PANTHER" id="PTHR13375">
    <property type="entry name" value="FMS INTERACTING PROTEIN"/>
    <property type="match status" value="1"/>
</dbReference>
<dbReference type="PANTHER" id="PTHR13375:SF3">
    <property type="entry name" value="THO COMPLEX SUBUNIT 5 HOMOLOG"/>
    <property type="match status" value="1"/>
</dbReference>
<dbReference type="Pfam" id="PF09766">
    <property type="entry name" value="FmiP_Thoc5"/>
    <property type="match status" value="1"/>
</dbReference>
<feature type="chain" id="PRO_0000353829" description="THO complex subunit tho5">
    <location>
        <begin position="1"/>
        <end position="200"/>
    </location>
</feature>
<accession>Q9USR5</accession>
<comment type="function">
    <text evidence="1 3">Component the THO subcomplex of the TREX complex, which operates in coupling transcription elongation to mRNA export (By similarity). The THO complex is recruited to transcribed genes and moves along the gene with the elongating polymerase during transcription (By similarity). THO is important for stabilizing nascent RNA in the RNA polymerase II elongation complex by preventing formation of DNA:RNA hybrids behind the elongating polymerase (By similarity). The THO complex is also required to maintain TRAMP complex occupancy at sites of snoRNA transcription thus promoting exosome-mediated degradation of snoRNA precursors (PubMed:22965128).</text>
</comment>
<comment type="subunit">
    <text evidence="1">Component of the THO and TREX complexes.</text>
</comment>
<comment type="subcellular location">
    <subcellularLocation>
        <location evidence="2">Cytoplasm</location>
    </subcellularLocation>
    <subcellularLocation>
        <location evidence="2">Nucleus</location>
    </subcellularLocation>
</comment>
<comment type="disruption phenotype">
    <text evidence="3">Results in increased levels of H/ACA box and C/D box snoRNAs.</text>
</comment>
<comment type="similarity">
    <text evidence="5">Belongs to the THOC5 family.</text>
</comment>
<name>THOC5_SCHPO</name>
<gene>
    <name evidence="4" type="primary">tho5</name>
    <name type="ORF">SPBC577.04</name>
</gene>
<reference key="1">
    <citation type="journal article" date="2002" name="Nature">
        <title>The genome sequence of Schizosaccharomyces pombe.</title>
        <authorList>
            <person name="Wood V."/>
            <person name="Gwilliam R."/>
            <person name="Rajandream M.A."/>
            <person name="Lyne M.H."/>
            <person name="Lyne R."/>
            <person name="Stewart A."/>
            <person name="Sgouros J.G."/>
            <person name="Peat N."/>
            <person name="Hayles J."/>
            <person name="Baker S.G."/>
            <person name="Basham D."/>
            <person name="Bowman S."/>
            <person name="Brooks K."/>
            <person name="Brown D."/>
            <person name="Brown S."/>
            <person name="Chillingworth T."/>
            <person name="Churcher C.M."/>
            <person name="Collins M."/>
            <person name="Connor R."/>
            <person name="Cronin A."/>
            <person name="Davis P."/>
            <person name="Feltwell T."/>
            <person name="Fraser A."/>
            <person name="Gentles S."/>
            <person name="Goble A."/>
            <person name="Hamlin N."/>
            <person name="Harris D.E."/>
            <person name="Hidalgo J."/>
            <person name="Hodgson G."/>
            <person name="Holroyd S."/>
            <person name="Hornsby T."/>
            <person name="Howarth S."/>
            <person name="Huckle E.J."/>
            <person name="Hunt S."/>
            <person name="Jagels K."/>
            <person name="James K.D."/>
            <person name="Jones L."/>
            <person name="Jones M."/>
            <person name="Leather S."/>
            <person name="McDonald S."/>
            <person name="McLean J."/>
            <person name="Mooney P."/>
            <person name="Moule S."/>
            <person name="Mungall K.L."/>
            <person name="Murphy L.D."/>
            <person name="Niblett D."/>
            <person name="Odell C."/>
            <person name="Oliver K."/>
            <person name="O'Neil S."/>
            <person name="Pearson D."/>
            <person name="Quail M.A."/>
            <person name="Rabbinowitsch E."/>
            <person name="Rutherford K.M."/>
            <person name="Rutter S."/>
            <person name="Saunders D."/>
            <person name="Seeger K."/>
            <person name="Sharp S."/>
            <person name="Skelton J."/>
            <person name="Simmonds M.N."/>
            <person name="Squares R."/>
            <person name="Squares S."/>
            <person name="Stevens K."/>
            <person name="Taylor K."/>
            <person name="Taylor R.G."/>
            <person name="Tivey A."/>
            <person name="Walsh S.V."/>
            <person name="Warren T."/>
            <person name="Whitehead S."/>
            <person name="Woodward J.R."/>
            <person name="Volckaert G."/>
            <person name="Aert R."/>
            <person name="Robben J."/>
            <person name="Grymonprez B."/>
            <person name="Weltjens I."/>
            <person name="Vanstreels E."/>
            <person name="Rieger M."/>
            <person name="Schaefer M."/>
            <person name="Mueller-Auer S."/>
            <person name="Gabel C."/>
            <person name="Fuchs M."/>
            <person name="Duesterhoeft A."/>
            <person name="Fritzc C."/>
            <person name="Holzer E."/>
            <person name="Moestl D."/>
            <person name="Hilbert H."/>
            <person name="Borzym K."/>
            <person name="Langer I."/>
            <person name="Beck A."/>
            <person name="Lehrach H."/>
            <person name="Reinhardt R."/>
            <person name="Pohl T.M."/>
            <person name="Eger P."/>
            <person name="Zimmermann W."/>
            <person name="Wedler H."/>
            <person name="Wambutt R."/>
            <person name="Purnelle B."/>
            <person name="Goffeau A."/>
            <person name="Cadieu E."/>
            <person name="Dreano S."/>
            <person name="Gloux S."/>
            <person name="Lelaure V."/>
            <person name="Mottier S."/>
            <person name="Galibert F."/>
            <person name="Aves S.J."/>
            <person name="Xiang Z."/>
            <person name="Hunt C."/>
            <person name="Moore K."/>
            <person name="Hurst S.M."/>
            <person name="Lucas M."/>
            <person name="Rochet M."/>
            <person name="Gaillardin C."/>
            <person name="Tallada V.A."/>
            <person name="Garzon A."/>
            <person name="Thode G."/>
            <person name="Daga R.R."/>
            <person name="Cruzado L."/>
            <person name="Jimenez J."/>
            <person name="Sanchez M."/>
            <person name="del Rey F."/>
            <person name="Benito J."/>
            <person name="Dominguez A."/>
            <person name="Revuelta J.L."/>
            <person name="Moreno S."/>
            <person name="Armstrong J."/>
            <person name="Forsburg S.L."/>
            <person name="Cerutti L."/>
            <person name="Lowe T."/>
            <person name="McCombie W.R."/>
            <person name="Paulsen I."/>
            <person name="Potashkin J."/>
            <person name="Shpakovski G.V."/>
            <person name="Ussery D."/>
            <person name="Barrell B.G."/>
            <person name="Nurse P."/>
        </authorList>
    </citation>
    <scope>NUCLEOTIDE SEQUENCE [LARGE SCALE GENOMIC DNA]</scope>
    <source>
        <strain>972 / ATCC 24843</strain>
    </source>
</reference>
<reference key="2">
    <citation type="journal article" date="2006" name="Nat. Biotechnol.">
        <title>ORFeome cloning and global analysis of protein localization in the fission yeast Schizosaccharomyces pombe.</title>
        <authorList>
            <person name="Matsuyama A."/>
            <person name="Arai R."/>
            <person name="Yashiroda Y."/>
            <person name="Shirai A."/>
            <person name="Kamata A."/>
            <person name="Sekido S."/>
            <person name="Kobayashi Y."/>
            <person name="Hashimoto A."/>
            <person name="Hamamoto M."/>
            <person name="Hiraoka Y."/>
            <person name="Horinouchi S."/>
            <person name="Yoshida M."/>
        </authorList>
    </citation>
    <scope>SUBCELLULAR LOCATION [LARGE SCALE ANALYSIS]</scope>
</reference>
<reference key="3">
    <citation type="journal article" date="2012" name="Nucleic Acids Res.">
        <title>The THO complex cooperates with the nuclear RNA surveillance machinery to control small nucleolar RNA expression.</title>
        <authorList>
            <person name="Larochelle M."/>
            <person name="Lemay J.F."/>
            <person name="Bachand F."/>
        </authorList>
    </citation>
    <scope>FUNCTION</scope>
    <scope>DISRUPTION PHENOTYPE</scope>
</reference>
<sequence>MTENAISDCLNVLDSTRTLCLRIHELKQHSRDADDQNPEQIKRQLMSKLLILREANRKSYEQLVQAKTITAEHKSELDNARIRLQALQYKKLHLKTIIKNYEEKEHIYTALPLVSKEEFLKEHPEFKSSNDHDLMLAILEDELKERQRLSTLKQELLKRKAALISENKAKRNALQKGDEKLQTFLRSSVPVQEYYNITSM</sequence>
<evidence type="ECO:0000250" key="1">
    <source>
        <dbReference type="UniProtKB" id="Q13769"/>
    </source>
</evidence>
<evidence type="ECO:0000269" key="2">
    <source>
    </source>
</evidence>
<evidence type="ECO:0000269" key="3">
    <source>
    </source>
</evidence>
<evidence type="ECO:0000303" key="4">
    <source>
    </source>
</evidence>
<evidence type="ECO:0000305" key="5"/>
<proteinExistence type="inferred from homology"/>
<organism>
    <name type="scientific">Schizosaccharomyces pombe (strain 972 / ATCC 24843)</name>
    <name type="common">Fission yeast</name>
    <dbReference type="NCBI Taxonomy" id="284812"/>
    <lineage>
        <taxon>Eukaryota</taxon>
        <taxon>Fungi</taxon>
        <taxon>Dikarya</taxon>
        <taxon>Ascomycota</taxon>
        <taxon>Taphrinomycotina</taxon>
        <taxon>Schizosaccharomycetes</taxon>
        <taxon>Schizosaccharomycetales</taxon>
        <taxon>Schizosaccharomycetaceae</taxon>
        <taxon>Schizosaccharomyces</taxon>
    </lineage>
</organism>